<reference key="1">
    <citation type="journal article" date="2007" name="ISME J.">
        <title>Population level functional diversity in a microbial community revealed by comparative genomic and metagenomic analyses.</title>
        <authorList>
            <person name="Bhaya D."/>
            <person name="Grossman A.R."/>
            <person name="Steunou A.-S."/>
            <person name="Khuri N."/>
            <person name="Cohan F.M."/>
            <person name="Hamamura N."/>
            <person name="Melendrez M.C."/>
            <person name="Bateson M.M."/>
            <person name="Ward D.M."/>
            <person name="Heidelberg J.F."/>
        </authorList>
    </citation>
    <scope>NUCLEOTIDE SEQUENCE [LARGE SCALE GENOMIC DNA]</scope>
    <source>
        <strain>JA-3-3Ab</strain>
    </source>
</reference>
<organism>
    <name type="scientific">Synechococcus sp. (strain JA-3-3Ab)</name>
    <name type="common">Cyanobacteria bacterium Yellowstone A-Prime</name>
    <dbReference type="NCBI Taxonomy" id="321327"/>
    <lineage>
        <taxon>Bacteria</taxon>
        <taxon>Bacillati</taxon>
        <taxon>Cyanobacteriota</taxon>
        <taxon>Cyanophyceae</taxon>
        <taxon>Synechococcales</taxon>
        <taxon>Synechococcaceae</taxon>
        <taxon>Synechococcus</taxon>
    </lineage>
</organism>
<accession>Q2JWK9</accession>
<gene>
    <name evidence="1" type="primary">sasA</name>
    <name type="ordered locus">CYA_0637</name>
</gene>
<proteinExistence type="inferred from homology"/>
<protein>
    <recommendedName>
        <fullName evidence="1">Adaptive-response sensory kinase SasA</fullName>
        <ecNumber evidence="1">2.7.13.3</ecNumber>
    </recommendedName>
    <alternativeName>
        <fullName evidence="1">Sensor histidine kinase SasA</fullName>
    </alternativeName>
</protein>
<dbReference type="EC" id="2.7.13.3" evidence="1"/>
<dbReference type="EMBL" id="CP000239">
    <property type="protein sequence ID" value="ABC98850.1"/>
    <property type="molecule type" value="Genomic_DNA"/>
</dbReference>
<dbReference type="RefSeq" id="WP_011429533.1">
    <property type="nucleotide sequence ID" value="NC_007775.1"/>
</dbReference>
<dbReference type="SMR" id="Q2JWK9"/>
<dbReference type="STRING" id="321327.CYA_0637"/>
<dbReference type="KEGG" id="cya:CYA_0637"/>
<dbReference type="eggNOG" id="COG2205">
    <property type="taxonomic scope" value="Bacteria"/>
</dbReference>
<dbReference type="HOGENOM" id="CLU_723030_0_0_3"/>
<dbReference type="OrthoDB" id="9773956at2"/>
<dbReference type="Proteomes" id="UP000008818">
    <property type="component" value="Chromosome"/>
</dbReference>
<dbReference type="GO" id="GO:0005524">
    <property type="term" value="F:ATP binding"/>
    <property type="evidence" value="ECO:0007669"/>
    <property type="project" value="UniProtKB-KW"/>
</dbReference>
<dbReference type="GO" id="GO:0000155">
    <property type="term" value="F:phosphorelay sensor kinase activity"/>
    <property type="evidence" value="ECO:0007669"/>
    <property type="project" value="InterPro"/>
</dbReference>
<dbReference type="GO" id="GO:0007623">
    <property type="term" value="P:circadian rhythm"/>
    <property type="evidence" value="ECO:0007669"/>
    <property type="project" value="UniProtKB-UniRule"/>
</dbReference>
<dbReference type="CDD" id="cd00082">
    <property type="entry name" value="HisKA"/>
    <property type="match status" value="1"/>
</dbReference>
<dbReference type="FunFam" id="3.30.565.10:FF:000006">
    <property type="entry name" value="Sensor histidine kinase WalK"/>
    <property type="match status" value="1"/>
</dbReference>
<dbReference type="Gene3D" id="1.10.287.130">
    <property type="match status" value="1"/>
</dbReference>
<dbReference type="Gene3D" id="3.40.30.10">
    <property type="entry name" value="Glutaredoxin"/>
    <property type="match status" value="1"/>
</dbReference>
<dbReference type="Gene3D" id="3.30.565.10">
    <property type="entry name" value="Histidine kinase-like ATPase, C-terminal domain"/>
    <property type="match status" value="1"/>
</dbReference>
<dbReference type="HAMAP" id="MF_01837">
    <property type="entry name" value="Kinase_SasA"/>
    <property type="match status" value="1"/>
</dbReference>
<dbReference type="InterPro" id="IPR036890">
    <property type="entry name" value="HATPase_C_sf"/>
</dbReference>
<dbReference type="InterPro" id="IPR005467">
    <property type="entry name" value="His_kinase_dom"/>
</dbReference>
<dbReference type="InterPro" id="IPR003661">
    <property type="entry name" value="HisK_dim/P_dom"/>
</dbReference>
<dbReference type="InterPro" id="IPR036097">
    <property type="entry name" value="HisK_dim/P_sf"/>
</dbReference>
<dbReference type="InterPro" id="IPR011649">
    <property type="entry name" value="KaiB_domain"/>
</dbReference>
<dbReference type="InterPro" id="IPR023527">
    <property type="entry name" value="Kinase_SasA"/>
</dbReference>
<dbReference type="InterPro" id="IPR004358">
    <property type="entry name" value="Sig_transdc_His_kin-like_C"/>
</dbReference>
<dbReference type="InterPro" id="IPR036249">
    <property type="entry name" value="Thioredoxin-like_sf"/>
</dbReference>
<dbReference type="NCBIfam" id="NF006800">
    <property type="entry name" value="PRK09303.1"/>
    <property type="match status" value="1"/>
</dbReference>
<dbReference type="PANTHER" id="PTHR43547:SF2">
    <property type="entry name" value="HYBRID SIGNAL TRANSDUCTION HISTIDINE KINASE C"/>
    <property type="match status" value="1"/>
</dbReference>
<dbReference type="PANTHER" id="PTHR43547">
    <property type="entry name" value="TWO-COMPONENT HISTIDINE KINASE"/>
    <property type="match status" value="1"/>
</dbReference>
<dbReference type="Pfam" id="PF02518">
    <property type="entry name" value="HATPase_c"/>
    <property type="match status" value="1"/>
</dbReference>
<dbReference type="Pfam" id="PF00512">
    <property type="entry name" value="HisKA"/>
    <property type="match status" value="1"/>
</dbReference>
<dbReference type="Pfam" id="PF07689">
    <property type="entry name" value="KaiB"/>
    <property type="match status" value="1"/>
</dbReference>
<dbReference type="PRINTS" id="PR00344">
    <property type="entry name" value="BCTRLSENSOR"/>
</dbReference>
<dbReference type="SMART" id="SM00387">
    <property type="entry name" value="HATPase_c"/>
    <property type="match status" value="1"/>
</dbReference>
<dbReference type="SMART" id="SM00388">
    <property type="entry name" value="HisKA"/>
    <property type="match status" value="1"/>
</dbReference>
<dbReference type="SMART" id="SM01248">
    <property type="entry name" value="KaiB"/>
    <property type="match status" value="1"/>
</dbReference>
<dbReference type="SUPFAM" id="SSF55874">
    <property type="entry name" value="ATPase domain of HSP90 chaperone/DNA topoisomerase II/histidine kinase"/>
    <property type="match status" value="1"/>
</dbReference>
<dbReference type="SUPFAM" id="SSF47384">
    <property type="entry name" value="Homodimeric domain of signal transducing histidine kinase"/>
    <property type="match status" value="1"/>
</dbReference>
<dbReference type="SUPFAM" id="SSF52833">
    <property type="entry name" value="Thioredoxin-like"/>
    <property type="match status" value="1"/>
</dbReference>
<dbReference type="PROSITE" id="PS50109">
    <property type="entry name" value="HIS_KIN"/>
    <property type="match status" value="1"/>
</dbReference>
<sequence>MQTSLDRTSTRSGIRLLLFAQGRANIEELAEQLRRHIQGLPGQHPAHLKVVPLEEHPYLAEHYKLVVTPALVKAEPLPAQVLAGEDLATQLEVWWPRWQGQAALVSYQEEAGQDPAPPPTTEALLQMSEEVFSLRQERAQLREQLDFKDRVLAMLVHDLRSPLTATALAVETLQQGREGSLDKAVERQLFEHARQQLRKMDSMITDILESARGSASELRIRAVETQLASLCQPVIEELLPRIQAKQLQFQADIPVDLPTVHVDPDKIRQVIFNLLDNAIKYTPAGGSIRLNILHRTSQKVQVTVSDTGPGIPEAEQENIFSDAVRLSRDQQQEGYGIGLSLCRRIVRAHYGQIWVESILGKGSSFHFTLPVYRLCGR</sequence>
<comment type="function">
    <text evidence="1">Member of the two-component regulatory system SasA/RpaA involved in genome-wide circadian gene expression. One of several clock output pathways. Participates in the Kai clock protein complex, the main circadian regulator in cyanobacteria, via its interaction with KaiC. KaiC enhances the autophosphorylation activity of SasA, which then transfers its phosphate group to RpaA to activate it. In addition to its output function, recruits fold-shifted KaiB (KaiB(fs)) to KaiC to cooperatively form the KaiB(6):KaiC(6) complex (independent of SasA kinase activity). Required for robustness of the circadian rhythm of gene expression and is involved in clock output, also required for adaptation to light/dark cycles.</text>
</comment>
<comment type="catalytic activity">
    <reaction evidence="1">
        <text>ATP + protein L-histidine = ADP + protein N-phospho-L-histidine.</text>
        <dbReference type="EC" id="2.7.13.3"/>
    </reaction>
</comment>
<comment type="subunit">
    <text evidence="1">Homooligomerizes. Interacts with KaiC. Participates in the KaiABC clock complex, whose core is composed of a KaiC homohexamer, 6 KaiB and up to 6 KaiA dimers. SasA and KaiB(fs) compete to bind to KaiC.</text>
</comment>
<comment type="domain">
    <text evidence="1">The N-terminus interacts with KaiC, while the C-terminal histidine kinase domain autophosphorylates and is probably responsible for self-oligomerization. The N-terminal domain stimulates the C-terminus to autophosphorylate.</text>
</comment>
<keyword id="KW-0067">ATP-binding</keyword>
<keyword id="KW-0090">Biological rhythms</keyword>
<keyword id="KW-0418">Kinase</keyword>
<keyword id="KW-0547">Nucleotide-binding</keyword>
<keyword id="KW-0597">Phosphoprotein</keyword>
<keyword id="KW-0808">Transferase</keyword>
<keyword id="KW-0902">Two-component regulatory system</keyword>
<name>SASA_SYNJA</name>
<feature type="chain" id="PRO_1000088446" description="Adaptive-response sensory kinase SasA">
    <location>
        <begin position="1"/>
        <end position="377"/>
    </location>
</feature>
<feature type="domain" description="Histidine kinase" evidence="1">
    <location>
        <begin position="154"/>
        <end position="373"/>
    </location>
</feature>
<feature type="modified residue" description="Phosphohistidine; by autocatalysis" evidence="1">
    <location>
        <position position="157"/>
    </location>
</feature>
<evidence type="ECO:0000255" key="1">
    <source>
        <dbReference type="HAMAP-Rule" id="MF_01837"/>
    </source>
</evidence>